<name>CPSF2_BOVIN</name>
<dbReference type="EMBL" id="X75931">
    <property type="protein sequence ID" value="CAA53535.1"/>
    <property type="molecule type" value="mRNA"/>
</dbReference>
<dbReference type="PIR" id="A56351">
    <property type="entry name" value="A56351"/>
</dbReference>
<dbReference type="RefSeq" id="NP_787002.1">
    <property type="nucleotide sequence ID" value="NM_175808.2"/>
</dbReference>
<dbReference type="RefSeq" id="XP_005222184.1">
    <property type="nucleotide sequence ID" value="XM_005222127.5"/>
</dbReference>
<dbReference type="SMR" id="Q10568"/>
<dbReference type="FunCoup" id="Q10568">
    <property type="interactions" value="5092"/>
</dbReference>
<dbReference type="IntAct" id="Q10568">
    <property type="interactions" value="1"/>
</dbReference>
<dbReference type="MINT" id="Q10568"/>
<dbReference type="STRING" id="9913.ENSBTAP00000013500"/>
<dbReference type="PaxDb" id="9913-ENSBTAP00000013500"/>
<dbReference type="GeneID" id="327689"/>
<dbReference type="KEGG" id="bta:327689"/>
<dbReference type="CTD" id="53981"/>
<dbReference type="VEuPathDB" id="HostDB:ENSBTAG00000010227"/>
<dbReference type="eggNOG" id="KOG1135">
    <property type="taxonomic scope" value="Eukaryota"/>
</dbReference>
<dbReference type="HOGENOM" id="CLU_002227_1_1_1"/>
<dbReference type="InParanoid" id="Q10568"/>
<dbReference type="OMA" id="QSRHNME"/>
<dbReference type="OrthoDB" id="64353at2759"/>
<dbReference type="TreeFam" id="TF106131"/>
<dbReference type="Reactome" id="R-BTA-159231">
    <property type="pathway name" value="Transport of Mature mRNA Derived from an Intronless Transcript"/>
</dbReference>
<dbReference type="Reactome" id="R-BTA-72187">
    <property type="pathway name" value="mRNA 3'-end processing"/>
</dbReference>
<dbReference type="Reactome" id="R-BTA-72203">
    <property type="pathway name" value="Processing of Capped Intron-Containing Pre-mRNA"/>
</dbReference>
<dbReference type="Reactome" id="R-BTA-73856">
    <property type="pathway name" value="RNA Polymerase II Transcription Termination"/>
</dbReference>
<dbReference type="Reactome" id="R-BTA-77595">
    <property type="pathway name" value="Processing of Intronless Pre-mRNAs"/>
</dbReference>
<dbReference type="Proteomes" id="UP000009136">
    <property type="component" value="Chromosome 21"/>
</dbReference>
<dbReference type="Bgee" id="ENSBTAG00000010227">
    <property type="expression patterns" value="Expressed in spermatid and 109 other cell types or tissues"/>
</dbReference>
<dbReference type="GO" id="GO:0005847">
    <property type="term" value="C:mRNA cleavage and polyadenylation specificity factor complex"/>
    <property type="evidence" value="ECO:0000250"/>
    <property type="project" value="UniProtKB"/>
</dbReference>
<dbReference type="GO" id="GO:0003723">
    <property type="term" value="F:RNA binding"/>
    <property type="evidence" value="ECO:0000318"/>
    <property type="project" value="GO_Central"/>
</dbReference>
<dbReference type="GO" id="GO:0006398">
    <property type="term" value="P:mRNA 3'-end processing by stem-loop binding and cleavage"/>
    <property type="evidence" value="ECO:0000250"/>
    <property type="project" value="UniProtKB"/>
</dbReference>
<dbReference type="CDD" id="cd16293">
    <property type="entry name" value="CPSF2-like_MBL-fold"/>
    <property type="match status" value="1"/>
</dbReference>
<dbReference type="FunFam" id="3.60.15.10:FF:000008">
    <property type="entry name" value="Cleavage and polyadenylation specificity factor subunit 2"/>
    <property type="match status" value="1"/>
</dbReference>
<dbReference type="Gene3D" id="3.60.15.10">
    <property type="entry name" value="Ribonuclease Z/Hydroxyacylglutathione hydrolase-like"/>
    <property type="match status" value="1"/>
</dbReference>
<dbReference type="InterPro" id="IPR022712">
    <property type="entry name" value="Beta_Casp"/>
</dbReference>
<dbReference type="InterPro" id="IPR027075">
    <property type="entry name" value="CPSF2"/>
</dbReference>
<dbReference type="InterPro" id="IPR025069">
    <property type="entry name" value="Cpsf2_C"/>
</dbReference>
<dbReference type="InterPro" id="IPR035639">
    <property type="entry name" value="CPSF2_MBL"/>
</dbReference>
<dbReference type="InterPro" id="IPR001279">
    <property type="entry name" value="Metallo-B-lactamas"/>
</dbReference>
<dbReference type="InterPro" id="IPR036866">
    <property type="entry name" value="RibonucZ/Hydroxyglut_hydro"/>
</dbReference>
<dbReference type="InterPro" id="IPR011108">
    <property type="entry name" value="RMMBL"/>
</dbReference>
<dbReference type="PANTHER" id="PTHR45922">
    <property type="entry name" value="CLEAVAGE AND POLYADENYLATION SPECIFICITY FACTOR SUBUNIT 2"/>
    <property type="match status" value="1"/>
</dbReference>
<dbReference type="PANTHER" id="PTHR45922:SF1">
    <property type="entry name" value="CLEAVAGE AND POLYADENYLATION SPECIFICITY FACTOR SUBUNIT 2"/>
    <property type="match status" value="1"/>
</dbReference>
<dbReference type="Pfam" id="PF10996">
    <property type="entry name" value="Beta-Casp"/>
    <property type="match status" value="1"/>
</dbReference>
<dbReference type="Pfam" id="PF13299">
    <property type="entry name" value="CPSF100_C"/>
    <property type="match status" value="1"/>
</dbReference>
<dbReference type="Pfam" id="PF16661">
    <property type="entry name" value="Lactamase_B_6"/>
    <property type="match status" value="1"/>
</dbReference>
<dbReference type="Pfam" id="PF07521">
    <property type="entry name" value="RMMBL"/>
    <property type="match status" value="1"/>
</dbReference>
<dbReference type="SMART" id="SM01027">
    <property type="entry name" value="Beta-Casp"/>
    <property type="match status" value="1"/>
</dbReference>
<dbReference type="SMART" id="SM00849">
    <property type="entry name" value="Lactamase_B"/>
    <property type="match status" value="1"/>
</dbReference>
<dbReference type="SUPFAM" id="SSF56281">
    <property type="entry name" value="Metallo-hydrolase/oxidoreductase"/>
    <property type="match status" value="1"/>
</dbReference>
<organism>
    <name type="scientific">Bos taurus</name>
    <name type="common">Bovine</name>
    <dbReference type="NCBI Taxonomy" id="9913"/>
    <lineage>
        <taxon>Eukaryota</taxon>
        <taxon>Metazoa</taxon>
        <taxon>Chordata</taxon>
        <taxon>Craniata</taxon>
        <taxon>Vertebrata</taxon>
        <taxon>Euteleostomi</taxon>
        <taxon>Mammalia</taxon>
        <taxon>Eutheria</taxon>
        <taxon>Laurasiatheria</taxon>
        <taxon>Artiodactyla</taxon>
        <taxon>Ruminantia</taxon>
        <taxon>Pecora</taxon>
        <taxon>Bovidae</taxon>
        <taxon>Bovinae</taxon>
        <taxon>Bos</taxon>
    </lineage>
</organism>
<comment type="function">
    <text evidence="1">Component of the cleavage and polyadenylation specificity factor (CPSF) complex that play a key role in pre-mRNA 3'-end formation, recognizing the AAUAAA signal sequence and interacting with poly(A) polymerase and other factors to bring about cleavage and poly(A) addition. Involved in the histone 3' end pre-mRNA processing (By similarity).</text>
</comment>
<comment type="subunit">
    <text evidence="2 3">Component of the cleavage and polyadenylation specificity factor (CPSF) complex, composed of CPSF1, CPSF2, CPSF3, CPSF4 and FIP1L1. Interacts with CPSF3, CSTF2 and SYMPK. Interacts with ZC3H3.</text>
</comment>
<comment type="subcellular location">
    <subcellularLocation>
        <location evidence="5">Nucleus</location>
    </subcellularLocation>
</comment>
<comment type="similarity">
    <text evidence="5">Belongs to the metallo-beta-lactamase superfamily. RNA-metabolizing metallo-beta-lactamase-like family. CPSF2/YSH1 subfamily.</text>
</comment>
<accession>Q10568</accession>
<sequence>MTSIIKLTTLSGVQEESALCYLLQVDEFRFLLDCGWDEHFSMDIIDSLRKHVHQIDAVLLSHPDPLHLGALPYAVGKLGLNCAIYATIPVYKMGQMFMYDLYQSRHNTEDFTLFTLDDVDAAFDKIQQLKFSQIVNLKGKGHGLSITPLPAGHMIGGTIWKIVKDGEEEIVYAVDFNHKREIHLNGCSLEMLSRPSLLITDSFNATYVQPRRKQRDEQLLTNVLETLRGDGNVLIAVDTAGRVLELAQLLDQIWRTKDAGLGVYSLALLNNVSYNVVEFSKSQVEWMSDKLMRCFEDKRNNPFQFRHLSLCHGLSDLARVPSPKVVLASQPDLECGFSRDLFIQWCQDPKNSIILTYRTTPGTLARFLIDNPSEKVTEIELRKRVKLEGKELEEYLEKEKLKKEAAKKLEQSKEADIDSSDESDAEEDIDQPSAHKTKHDLMMKGEGSRKGSFFKQAKKSYPMFPAPEERIKWDEYGEIIKPEDFLVPELQATEEEKSKLESGLTNGDEPMDQDLSDVPTKCISTTESIEIKARVTYIDYEGRSDGDSIKKIINQMKPRQLIIVHGPPEASQDLAECCRAFGGKDIKVYMPKLHETVDATSETHIYQVRLKDSLVSSLQFCKAKDAELAWIDGVLDMRVSKVDTGVILEEGELKDDGEDSEMQVDAPSDSSVIAQQKAMKSLFGDDEKETGEESEIIPTLEPLPPHEVPGHQSVFMNEPRLSDFKQVLLREGIQAEFVGGVLVCNNQVAVRRTETGRIGLEGCLCQDFYRIRDLLYEQYAIV</sequence>
<gene>
    <name type="primary">CPSF2</name>
    <name type="synonym">CPSF100</name>
</gene>
<feature type="chain" id="PRO_0000074392" description="Cleavage and polyadenylation specificity factor subunit 2">
    <location>
        <begin position="1"/>
        <end position="782"/>
    </location>
</feature>
<feature type="region of interest" description="Disordered" evidence="4">
    <location>
        <begin position="407"/>
        <end position="452"/>
    </location>
</feature>
<feature type="compositionally biased region" description="Basic and acidic residues" evidence="4">
    <location>
        <begin position="407"/>
        <end position="416"/>
    </location>
</feature>
<feature type="compositionally biased region" description="Acidic residues" evidence="4">
    <location>
        <begin position="417"/>
        <end position="430"/>
    </location>
</feature>
<feature type="compositionally biased region" description="Basic and acidic residues" evidence="4">
    <location>
        <begin position="439"/>
        <end position="449"/>
    </location>
</feature>
<feature type="modified residue" description="Phosphoserine" evidence="3">
    <location>
        <position position="419"/>
    </location>
</feature>
<feature type="modified residue" description="Phosphoserine" evidence="3">
    <location>
        <position position="420"/>
    </location>
</feature>
<feature type="modified residue" description="Phosphoserine" evidence="3">
    <location>
        <position position="423"/>
    </location>
</feature>
<feature type="modified residue" description="Phosphoserine" evidence="3">
    <location>
        <position position="660"/>
    </location>
</feature>
<evidence type="ECO:0000250" key="1"/>
<evidence type="ECO:0000250" key="2">
    <source>
        <dbReference type="UniProtKB" id="O35218"/>
    </source>
</evidence>
<evidence type="ECO:0000250" key="3">
    <source>
        <dbReference type="UniProtKB" id="Q9P2I0"/>
    </source>
</evidence>
<evidence type="ECO:0000256" key="4">
    <source>
        <dbReference type="SAM" id="MobiDB-lite"/>
    </source>
</evidence>
<evidence type="ECO:0000305" key="5"/>
<protein>
    <recommendedName>
        <fullName>Cleavage and polyadenylation specificity factor subunit 2</fullName>
    </recommendedName>
    <alternativeName>
        <fullName>Cleavage and polyadenylation specificity factor 100 kDa subunit</fullName>
        <shortName>CPSF 100 kDa subunit</shortName>
    </alternativeName>
</protein>
<reference key="1">
    <citation type="journal article" date="1994" name="Mol. Cell. Biol.">
        <title>Characterization of cleavage and polyadenylation specificity factor and cloning of its 100-kilodalton subunit.</title>
        <authorList>
            <person name="Jenny A."/>
            <person name="Hauri H.-P."/>
            <person name="Keller W."/>
        </authorList>
    </citation>
    <scope>NUCLEOTIDE SEQUENCE [MRNA]</scope>
    <scope>PARTIAL PROTEIN SEQUENCE</scope>
    <source>
        <tissue>Thymus</tissue>
    </source>
</reference>
<reference key="2">
    <citation type="submission" date="1995-08" db="EMBL/GenBank/DDBJ databases">
        <authorList>
            <person name="Jenny A."/>
        </authorList>
    </citation>
    <scope>SEQUENCE REVISION</scope>
</reference>
<proteinExistence type="evidence at protein level"/>
<keyword id="KW-0903">Direct protein sequencing</keyword>
<keyword id="KW-0507">mRNA processing</keyword>
<keyword id="KW-0539">Nucleus</keyword>
<keyword id="KW-0597">Phosphoprotein</keyword>
<keyword id="KW-1185">Reference proteome</keyword>
<keyword id="KW-0694">RNA-binding</keyword>